<proteinExistence type="evidence at protein level"/>
<accession>P0A7M9</accession>
<accession>P02432</accession>
<accession>Q2M8N2</accession>
<feature type="chain" id="PRO_0000173102" description="Large ribosomal subunit protein bL31">
    <location>
        <begin position="1"/>
        <end position="70"/>
    </location>
</feature>
<feature type="binding site" evidence="12">
    <location>
        <position position="16"/>
    </location>
    <ligand>
        <name>Zn(2+)</name>
        <dbReference type="ChEBI" id="CHEBI:29105"/>
    </ligand>
</feature>
<feature type="modified residue" description="N6-acetyllysine" evidence="5">
    <location>
        <position position="8"/>
    </location>
</feature>
<feature type="mutagenesis site" description="No Zn(2+) binding." evidence="6">
    <original>C</original>
    <variation>S</variation>
    <location>
        <position position="16"/>
    </location>
</feature>
<feature type="mutagenesis site" description="Binds Zn(2+) normally." evidence="6">
    <original>C</original>
    <variation>S</variation>
    <location>
        <position position="18"/>
    </location>
</feature>
<feature type="mutagenesis site" description="Binds Zn(2+) normally." evidence="6">
    <original>CSKC</original>
    <variation>SSKS</variation>
    <location>
        <begin position="37"/>
        <end position="40"/>
    </location>
</feature>
<feature type="strand" evidence="15">
    <location>
        <begin position="3"/>
        <end position="6"/>
    </location>
</feature>
<feature type="strand" evidence="15">
    <location>
        <begin position="10"/>
        <end position="15"/>
    </location>
</feature>
<feature type="strand" evidence="15">
    <location>
        <begin position="17"/>
        <end position="19"/>
    </location>
</feature>
<feature type="strand" evidence="15">
    <location>
        <begin position="21"/>
        <end position="28"/>
    </location>
</feature>
<feature type="strand" evidence="13">
    <location>
        <begin position="33"/>
        <end position="35"/>
    </location>
</feature>
<feature type="helix" evidence="15">
    <location>
        <begin position="38"/>
        <end position="40"/>
    </location>
</feature>
<feature type="helix" evidence="15">
    <location>
        <begin position="42"/>
        <end position="45"/>
    </location>
</feature>
<feature type="helix" evidence="14">
    <location>
        <begin position="56"/>
        <end position="63"/>
    </location>
</feature>
<protein>
    <recommendedName>
        <fullName evidence="11">Large ribosomal subunit protein bL31</fullName>
    </recommendedName>
    <alternativeName>
        <fullName>50S ribosomal protein L31</fullName>
    </alternativeName>
</protein>
<evidence type="ECO:0000250" key="1"/>
<evidence type="ECO:0000269" key="2">
    <source>
    </source>
</evidence>
<evidence type="ECO:0000269" key="3">
    <source>
    </source>
</evidence>
<evidence type="ECO:0000269" key="4">
    <source>
    </source>
</evidence>
<evidence type="ECO:0000269" key="5">
    <source>
    </source>
</evidence>
<evidence type="ECO:0000269" key="6">
    <source>
    </source>
</evidence>
<evidence type="ECO:0000269" key="7">
    <source>
    </source>
</evidence>
<evidence type="ECO:0000269" key="8">
    <source>
    </source>
</evidence>
<evidence type="ECO:0000269" key="9">
    <source>
    </source>
</evidence>
<evidence type="ECO:0000269" key="10">
    <source>
    </source>
</evidence>
<evidence type="ECO:0000303" key="11">
    <source>
    </source>
</evidence>
<evidence type="ECO:0000305" key="12"/>
<evidence type="ECO:0007829" key="13">
    <source>
        <dbReference type="PDB" id="8ANA"/>
    </source>
</evidence>
<evidence type="ECO:0007829" key="14">
    <source>
        <dbReference type="PDB" id="8CGI"/>
    </source>
</evidence>
<evidence type="ECO:0007829" key="15">
    <source>
        <dbReference type="PDB" id="8G6Y"/>
    </source>
</evidence>
<name>RL31_ECOLI</name>
<comment type="function">
    <text evidence="1">Binds the 23S rRNA.</text>
</comment>
<comment type="cofactor">
    <cofactor evidence="6">
        <name>Zn(2+)</name>
        <dbReference type="ChEBI" id="CHEBI:29105"/>
    </cofactor>
    <text evidence="6">Binds 1 zinc ion per subunit. Only 1 ligand appears to be Cys, the other are thought to be His and either backbone amides or solvent (PubMed:22196016).</text>
</comment>
<comment type="subunit">
    <text evidence="2 4 7 8 9 10">Part of the 50S ribosomal subunit.</text>
</comment>
<comment type="PTM">
    <text evidence="3 10">Proteolytically cleaved by protease VII to yield a peptide lacking residues 63-70. It is not clear if this is due to protein degradation or is a bona fide processing event in the strain used in PubMed:339950 and PubMed:10556732. In strains B, D10, MRE-600 and Q13 the only protein seen in PubMed:10556732 was full-length; the last 7 amino acids were sequenced only for strain MRE-600.</text>
</comment>
<comment type="mass spectrometry" mass="7871.0" method="MALDI" evidence="2"/>
<comment type="similarity">
    <text evidence="12">Belongs to the bacterial ribosomal protein bL31 family. Type A subfamily.</text>
</comment>
<keyword id="KW-0002">3D-structure</keyword>
<keyword id="KW-0007">Acetylation</keyword>
<keyword id="KW-0903">Direct protein sequencing</keyword>
<keyword id="KW-0479">Metal-binding</keyword>
<keyword id="KW-1185">Reference proteome</keyword>
<keyword id="KW-0687">Ribonucleoprotein</keyword>
<keyword id="KW-0689">Ribosomal protein</keyword>
<keyword id="KW-0694">RNA-binding</keyword>
<keyword id="KW-0699">rRNA-binding</keyword>
<keyword id="KW-0862">Zinc</keyword>
<sequence length="70" mass="7871">MKKDIHPKYEEITASCSCGNVMKIRSTVGHDLNLDVCSKCHPFFTGKQRDVATGGRVDRFNKRFNIPGSK</sequence>
<organism>
    <name type="scientific">Escherichia coli (strain K12)</name>
    <dbReference type="NCBI Taxonomy" id="83333"/>
    <lineage>
        <taxon>Bacteria</taxon>
        <taxon>Pseudomonadati</taxon>
        <taxon>Pseudomonadota</taxon>
        <taxon>Gammaproteobacteria</taxon>
        <taxon>Enterobacterales</taxon>
        <taxon>Enterobacteriaceae</taxon>
        <taxon>Escherichia</taxon>
    </lineage>
</organism>
<reference key="1">
    <citation type="journal article" date="1993" name="Nucleic Acids Res.">
        <title>Analysis of the Escherichia coli genome. III. DNA sequence of the region from 87.2 to 89.2 minutes.</title>
        <authorList>
            <person name="Plunkett G. III"/>
            <person name="Burland V."/>
            <person name="Daniels D.L."/>
            <person name="Blattner F.R."/>
        </authorList>
    </citation>
    <scope>NUCLEOTIDE SEQUENCE [LARGE SCALE GENOMIC DNA]</scope>
    <source>
        <strain>K12 / MG1655 / ATCC 47076</strain>
    </source>
</reference>
<reference key="2">
    <citation type="journal article" date="1997" name="Science">
        <title>The complete genome sequence of Escherichia coli K-12.</title>
        <authorList>
            <person name="Blattner F.R."/>
            <person name="Plunkett G. III"/>
            <person name="Bloch C.A."/>
            <person name="Perna N.T."/>
            <person name="Burland V."/>
            <person name="Riley M."/>
            <person name="Collado-Vides J."/>
            <person name="Glasner J.D."/>
            <person name="Rode C.K."/>
            <person name="Mayhew G.F."/>
            <person name="Gregor J."/>
            <person name="Davis N.W."/>
            <person name="Kirkpatrick H.A."/>
            <person name="Goeden M.A."/>
            <person name="Rose D.J."/>
            <person name="Mau B."/>
            <person name="Shao Y."/>
        </authorList>
    </citation>
    <scope>NUCLEOTIDE SEQUENCE [LARGE SCALE GENOMIC DNA]</scope>
    <source>
        <strain>K12 / MG1655 / ATCC 47076</strain>
    </source>
</reference>
<reference key="3">
    <citation type="journal article" date="2006" name="Mol. Syst. Biol.">
        <title>Highly accurate genome sequences of Escherichia coli K-12 strains MG1655 and W3110.</title>
        <authorList>
            <person name="Hayashi K."/>
            <person name="Morooka N."/>
            <person name="Yamamoto Y."/>
            <person name="Fujita K."/>
            <person name="Isono K."/>
            <person name="Choi S."/>
            <person name="Ohtsubo E."/>
            <person name="Baba T."/>
            <person name="Wanner B.L."/>
            <person name="Mori H."/>
            <person name="Horiuchi T."/>
        </authorList>
    </citation>
    <scope>NUCLEOTIDE SEQUENCE [LARGE SCALE GENOMIC DNA]</scope>
    <source>
        <strain>K12 / W3110 / ATCC 27325 / DSM 5911</strain>
    </source>
</reference>
<reference key="4">
    <citation type="journal article" date="1978" name="Biochemistry">
        <title>Primary structure of Escherichia coli ribosomal protein L31.</title>
        <authorList>
            <person name="Brosius J."/>
        </authorList>
    </citation>
    <scope>PROTEIN SEQUENCE OF 1-62</scope>
    <scope>SUBUNIT</scope>
    <source>
        <strain>B</strain>
    </source>
</reference>
<reference key="5">
    <citation type="journal article" date="1998" name="FEMS Microbiol. Lett.">
        <title>Small genes/gene-products in Escherichia coli K-12.</title>
        <authorList>
            <person name="Wasinger V.C."/>
            <person name="Humphery-Smith I."/>
        </authorList>
    </citation>
    <scope>PROTEIN SEQUENCE OF 1-10</scope>
    <source>
        <strain>K12</strain>
    </source>
</reference>
<reference key="6">
    <citation type="journal article" date="1999" name="FEMS Microbiol. Lett.">
        <title>Characterization of Escherichia coli 50S ribosomal protein L31.</title>
        <authorList>
            <person name="Eistetter A.J."/>
            <person name="Butler P.D."/>
            <person name="Traut R.R."/>
            <person name="Fanning T.G."/>
        </authorList>
    </citation>
    <scope>PROTEIN SEQUENCE OF 64-70 (STRAIN MRE-600)</scope>
    <scope>EXAMINATION OF MOLECULAR WEIGHT IN SEVERAL STRAINS</scope>
    <source>
        <strain>B</strain>
        <strain>K12 / D10</strain>
        <strain>K12 / Q13</strain>
        <strain>MRE-600</strain>
    </source>
</reference>
<reference key="7">
    <citation type="journal article" date="1999" name="Anal. Biochem.">
        <title>Observation of Escherichia coli ribosomal proteins and their posttranslational modifications by mass spectrometry.</title>
        <authorList>
            <person name="Arnold R.J."/>
            <person name="Reilly J.P."/>
        </authorList>
    </citation>
    <scope>MASS SPECTROMETRY</scope>
    <scope>SUBUNIT</scope>
    <source>
        <strain>K12 / ATCC 25404 / DSM 5698 / NCIMB 11290</strain>
    </source>
</reference>
<reference key="8">
    <citation type="journal article" date="2009" name="Mol. Cell. Proteomics">
        <title>Lysine acetylation is a highly abundant and evolutionarily conserved modification in Escherichia coli.</title>
        <authorList>
            <person name="Zhang J."/>
            <person name="Sprung R."/>
            <person name="Pei J."/>
            <person name="Tan X."/>
            <person name="Kim S."/>
            <person name="Zhu H."/>
            <person name="Liu C.F."/>
            <person name="Grishin N.V."/>
            <person name="Zhao Y."/>
        </authorList>
    </citation>
    <scope>ACETYLATION [LARGE SCALE ANALYSIS] AT LYS-8</scope>
    <scope>IDENTIFICATION BY MASS SPECTROMETRY</scope>
    <source>
        <strain>K12 / JW1106</strain>
        <strain>K12 / MG1655 / ATCC 47076</strain>
    </source>
</reference>
<reference key="9">
    <citation type="journal article" date="2012" name="J. Inorg. Biochem.">
        <title>Characterization of Zn(II)-responsive ribosomal proteins YkgM and L31 in E. coli.</title>
        <authorList>
            <person name="Hensley M.P."/>
            <person name="Gunasekera T.S."/>
            <person name="Easton J.A."/>
            <person name="Sigdel T.K."/>
            <person name="Sugarbaker S.A."/>
            <person name="Klingbeil L."/>
            <person name="Breece R.M."/>
            <person name="Tierney D.L."/>
            <person name="Crowder M.W."/>
        </authorList>
    </citation>
    <scope>ZINC-BINDING</scope>
    <scope>COFACTOR</scope>
    <scope>MUTAGENESIS OF CYS-16; CYS-18 AND 37-CYS--CYS-40</scope>
    <source>
        <strain>BW21135</strain>
    </source>
</reference>
<reference key="10">
    <citation type="journal article" date="2014" name="Curr. Opin. Struct. Biol.">
        <title>A new system for naming ribosomal proteins.</title>
        <authorList>
            <person name="Ban N."/>
            <person name="Beckmann R."/>
            <person name="Cate J.H.D."/>
            <person name="Dinman J.D."/>
            <person name="Dragon F."/>
            <person name="Ellis S.R."/>
            <person name="Lafontaine D.L.J."/>
            <person name="Lindahl L."/>
            <person name="Liljas A."/>
            <person name="Lipton J.M."/>
            <person name="McAlear M.A."/>
            <person name="Moore P.B."/>
            <person name="Noller H.F."/>
            <person name="Ortega J."/>
            <person name="Panse V.G."/>
            <person name="Ramakrishnan V."/>
            <person name="Spahn C.M.T."/>
            <person name="Steitz T.A."/>
            <person name="Tchorzewski M."/>
            <person name="Tollervey D."/>
            <person name="Warren A.J."/>
            <person name="Williamson J.R."/>
            <person name="Wilson D."/>
            <person name="Yonath A."/>
            <person name="Yusupov M."/>
        </authorList>
    </citation>
    <scope>NOMENCLATURE</scope>
</reference>
<reference key="11">
    <citation type="journal article" date="2005" name="Science">
        <title>Structures of the bacterial ribosome at 3.5 A resolution.</title>
        <authorList>
            <person name="Schuwirth B.S."/>
            <person name="Borovinskaya M.A."/>
            <person name="Hau C.W."/>
            <person name="Zhang W."/>
            <person name="Vila-Sanjurjo A."/>
            <person name="Holton J.M."/>
            <person name="Cate J.H.D."/>
        </authorList>
    </citation>
    <scope>X-RAY CRYSTALLOGRAPHY (3.46 ANGSTROMS) OF 2 DIFFERENT RIBOSOME STRUCTURES</scope>
    <scope>SUBUNIT</scope>
    <source>
        <strain>MRE-600</strain>
    </source>
</reference>
<reference key="12">
    <citation type="journal article" date="2017" name="Nature">
        <title>Mechanistic insights into the alternative translation termination by ArfA and RF2.</title>
        <authorList>
            <person name="Ma C."/>
            <person name="Kurita D."/>
            <person name="Li N."/>
            <person name="Chen Y."/>
            <person name="Himeno H."/>
            <person name="Gao N."/>
        </authorList>
    </citation>
    <scope>STRUCTURE BY ELECTRON MICROSCOPY (3.0 ANGSTROMS) OF 70S RIBOSOME IN COMPLEX WITH ARFA AND RF2</scope>
    <scope>SUBUNIT</scope>
</reference>
<reference key="13">
    <citation type="journal article" date="2017" name="Nature">
        <title>Structural basis for ArfA-RF2-mediated translation termination on mRNAs lacking stop codons.</title>
        <authorList>
            <person name="Huter P."/>
            <person name="Mueller C."/>
            <person name="Beckert B."/>
            <person name="Arenz S."/>
            <person name="Berninghausen O."/>
            <person name="Beckmann R."/>
            <person name="Wilson D.N."/>
        </authorList>
    </citation>
    <scope>STRUCTURE BY ELECTRON MICROSCOPY (3.1 ANGSTROMS) OF 70S RIBOSOME IN COMPLEX WITH ARFA AND RF2</scope>
    <scope>SUBUNIT</scope>
</reference>
<reference key="14">
    <citation type="journal article" date="2016" name="Science">
        <title>Translational termination without a stop codon.</title>
        <authorList>
            <person name="James N.R."/>
            <person name="Brown A."/>
            <person name="Gordiyenko Y."/>
            <person name="Ramakrishnan V."/>
        </authorList>
    </citation>
    <scope>STRUCTURE BY ELECTRON MICROSCOPY (2.97 ANGSTROMS) OF 70S RIBOSOME IN COMPLEX WITH ARFA AND RF2</scope>
    <scope>SUBUNIT</scope>
</reference>
<reference key="15">
    <citation type="journal article" date="2017" name="Nature">
        <title>Structural basis of co-translational quality control by ArfA and RF2 bound to ribosome.</title>
        <authorList>
            <person name="Zeng F."/>
            <person name="Chen Y."/>
            <person name="Remis J."/>
            <person name="Shekhar M."/>
            <person name="Phillips J.C."/>
            <person name="Tajkhorshid E."/>
            <person name="Jin H."/>
        </authorList>
    </citation>
    <scope>STRUCTURE BY ELECTRON MICROSCOPY (3.52 ANGSTROMS) OF 70S RIBOSOME IN COMPLEX WITH ARFA AND RF2</scope>
    <scope>SUBUNIT</scope>
</reference>
<gene>
    <name type="primary">rpmE</name>
    <name type="ordered locus">b3936</name>
    <name type="ordered locus">JW3907</name>
</gene>
<dbReference type="EMBL" id="X78541">
    <property type="protein sequence ID" value="CAA55286.1"/>
    <property type="molecule type" value="Genomic_DNA"/>
</dbReference>
<dbReference type="EMBL" id="L19201">
    <property type="protein sequence ID" value="AAB03068.1"/>
    <property type="molecule type" value="Genomic_DNA"/>
</dbReference>
<dbReference type="EMBL" id="U00096">
    <property type="protein sequence ID" value="AAC76918.1"/>
    <property type="molecule type" value="Genomic_DNA"/>
</dbReference>
<dbReference type="EMBL" id="AP009048">
    <property type="protein sequence ID" value="BAE77374.1"/>
    <property type="molecule type" value="Genomic_DNA"/>
</dbReference>
<dbReference type="PIR" id="S40879">
    <property type="entry name" value="R5EC31"/>
</dbReference>
<dbReference type="RefSeq" id="NP_418371.1">
    <property type="nucleotide sequence ID" value="NC_000913.3"/>
</dbReference>
<dbReference type="RefSeq" id="WP_000710769.1">
    <property type="nucleotide sequence ID" value="NZ_STEB01000017.1"/>
</dbReference>
<dbReference type="PDB" id="2J28">
    <property type="method" value="EM"/>
    <property type="resolution" value="8.00 A"/>
    <property type="chains" value="Z=1-70"/>
</dbReference>
<dbReference type="PDB" id="2RDO">
    <property type="method" value="EM"/>
    <property type="resolution" value="9.10 A"/>
    <property type="chains" value="Z=1-70"/>
</dbReference>
<dbReference type="PDB" id="3BBX">
    <property type="method" value="EM"/>
    <property type="resolution" value="10.00 A"/>
    <property type="chains" value="Z=1-70"/>
</dbReference>
<dbReference type="PDB" id="3J9Y">
    <property type="method" value="EM"/>
    <property type="resolution" value="3.90 A"/>
    <property type="chains" value="6=1-70"/>
</dbReference>
<dbReference type="PDB" id="3J9Z">
    <property type="method" value="EM"/>
    <property type="resolution" value="3.60 A"/>
    <property type="chains" value="LZ=1-70"/>
</dbReference>
<dbReference type="PDB" id="3JA1">
    <property type="method" value="EM"/>
    <property type="resolution" value="3.60 A"/>
    <property type="chains" value="L2=1-70"/>
</dbReference>
<dbReference type="PDB" id="4V4H">
    <property type="method" value="X-ray"/>
    <property type="resolution" value="3.46 A"/>
    <property type="chains" value="BZ/DZ=1-70"/>
</dbReference>
<dbReference type="PDB" id="4V4Q">
    <property type="method" value="X-ray"/>
    <property type="resolution" value="3.46 A"/>
    <property type="chains" value="BZ/DZ=1-70"/>
</dbReference>
<dbReference type="PDB" id="4V5B">
    <property type="method" value="X-ray"/>
    <property type="resolution" value="3.74 A"/>
    <property type="chains" value="AZ/CZ=1-70"/>
</dbReference>
<dbReference type="PDB" id="4V65">
    <property type="method" value="EM"/>
    <property type="resolution" value="9.00 A"/>
    <property type="chains" value="BS=1-70"/>
</dbReference>
<dbReference type="PDB" id="4V66">
    <property type="method" value="EM"/>
    <property type="resolution" value="9.00 A"/>
    <property type="chains" value="BS=1-70"/>
</dbReference>
<dbReference type="PDB" id="4V6K">
    <property type="method" value="EM"/>
    <property type="resolution" value="8.25 A"/>
    <property type="chains" value="Ab=1-70"/>
</dbReference>
<dbReference type="PDB" id="4V6L">
    <property type="method" value="EM"/>
    <property type="resolution" value="13.20 A"/>
    <property type="chains" value="Bb=1-70"/>
</dbReference>
<dbReference type="PDB" id="4V6N">
    <property type="method" value="EM"/>
    <property type="resolution" value="12.10 A"/>
    <property type="chains" value="A2=1-70"/>
</dbReference>
<dbReference type="PDB" id="4V6O">
    <property type="method" value="EM"/>
    <property type="resolution" value="14.70 A"/>
    <property type="chains" value="B2=1-70"/>
</dbReference>
<dbReference type="PDB" id="4V6P">
    <property type="method" value="EM"/>
    <property type="resolution" value="13.50 A"/>
    <property type="chains" value="B2=1-70"/>
</dbReference>
<dbReference type="PDB" id="4V6Q">
    <property type="method" value="EM"/>
    <property type="resolution" value="11.50 A"/>
    <property type="chains" value="B2=1-70"/>
</dbReference>
<dbReference type="PDB" id="4V6R">
    <property type="method" value="EM"/>
    <property type="resolution" value="11.50 A"/>
    <property type="chains" value="B2=1-70"/>
</dbReference>
<dbReference type="PDB" id="4V6S">
    <property type="method" value="EM"/>
    <property type="resolution" value="13.10 A"/>
    <property type="chains" value="A2=1-70"/>
</dbReference>
<dbReference type="PDB" id="4V6V">
    <property type="method" value="EM"/>
    <property type="resolution" value="9.80 A"/>
    <property type="chains" value="B4=1-70"/>
</dbReference>
<dbReference type="PDB" id="5AFI">
    <property type="method" value="EM"/>
    <property type="resolution" value="2.90 A"/>
    <property type="chains" value="6=1-70"/>
</dbReference>
<dbReference type="PDB" id="5AKA">
    <property type="method" value="EM"/>
    <property type="resolution" value="5.70 A"/>
    <property type="chains" value="Z=1-70"/>
</dbReference>
<dbReference type="PDB" id="5IQR">
    <property type="method" value="EM"/>
    <property type="resolution" value="3.00 A"/>
    <property type="chains" value="a=1-70"/>
</dbReference>
<dbReference type="PDB" id="5KCS">
    <property type="method" value="EM"/>
    <property type="resolution" value="3.90 A"/>
    <property type="chains" value="14=1-70"/>
</dbReference>
<dbReference type="PDB" id="5KPS">
    <property type="method" value="EM"/>
    <property type="resolution" value="3.90 A"/>
    <property type="chains" value="1=1-70"/>
</dbReference>
<dbReference type="PDB" id="5KPV">
    <property type="method" value="EM"/>
    <property type="resolution" value="4.10 A"/>
    <property type="chains" value="Z=1-70"/>
</dbReference>
<dbReference type="PDB" id="5KPW">
    <property type="method" value="EM"/>
    <property type="resolution" value="3.90 A"/>
    <property type="chains" value="Z=1-70"/>
</dbReference>
<dbReference type="PDB" id="5KPX">
    <property type="method" value="EM"/>
    <property type="resolution" value="3.90 A"/>
    <property type="chains" value="Z=1-70"/>
</dbReference>
<dbReference type="PDB" id="5L3P">
    <property type="method" value="EM"/>
    <property type="resolution" value="3.70 A"/>
    <property type="chains" value="4=1-70"/>
</dbReference>
<dbReference type="PDB" id="5LZA">
    <property type="method" value="EM"/>
    <property type="resolution" value="3.60 A"/>
    <property type="chains" value="6=1-66"/>
</dbReference>
<dbReference type="PDB" id="5LZB">
    <property type="method" value="EM"/>
    <property type="resolution" value="5.30 A"/>
    <property type="chains" value="6=1-66"/>
</dbReference>
<dbReference type="PDB" id="5LZC">
    <property type="method" value="EM"/>
    <property type="resolution" value="4.80 A"/>
    <property type="chains" value="6=1-66"/>
</dbReference>
<dbReference type="PDB" id="5LZD">
    <property type="method" value="EM"/>
    <property type="resolution" value="3.40 A"/>
    <property type="chains" value="6=1-66"/>
</dbReference>
<dbReference type="PDB" id="5LZE">
    <property type="method" value="EM"/>
    <property type="resolution" value="3.50 A"/>
    <property type="chains" value="6=1-66"/>
</dbReference>
<dbReference type="PDB" id="5LZF">
    <property type="method" value="EM"/>
    <property type="resolution" value="4.60 A"/>
    <property type="chains" value="6=1-66"/>
</dbReference>
<dbReference type="PDB" id="5MDV">
    <property type="method" value="EM"/>
    <property type="resolution" value="2.97 A"/>
    <property type="chains" value="a=1-70"/>
</dbReference>
<dbReference type="PDB" id="5MDW">
    <property type="method" value="EM"/>
    <property type="resolution" value="3.06 A"/>
    <property type="chains" value="a=1-70"/>
</dbReference>
<dbReference type="PDB" id="5MDY">
    <property type="method" value="EM"/>
    <property type="resolution" value="3.35 A"/>
    <property type="chains" value="a=1-70"/>
</dbReference>
<dbReference type="PDB" id="5MDZ">
    <property type="method" value="EM"/>
    <property type="resolution" value="3.10 A"/>
    <property type="chains" value="a=1-70"/>
</dbReference>
<dbReference type="PDB" id="5MGP">
    <property type="method" value="EM"/>
    <property type="resolution" value="3.10 A"/>
    <property type="chains" value="6=1-66"/>
</dbReference>
<dbReference type="PDB" id="5NP6">
    <property type="method" value="EM"/>
    <property type="resolution" value="3.60 A"/>
    <property type="chains" value="4=1-66"/>
</dbReference>
<dbReference type="PDB" id="5NWY">
    <property type="method" value="EM"/>
    <property type="resolution" value="2.93 A"/>
    <property type="chains" value="L=1-70"/>
</dbReference>
<dbReference type="PDB" id="5O2R">
    <property type="method" value="EM"/>
    <property type="resolution" value="3.40 A"/>
    <property type="chains" value="6=1-66"/>
</dbReference>
<dbReference type="PDB" id="5U9F">
    <property type="method" value="EM"/>
    <property type="resolution" value="3.20 A"/>
    <property type="chains" value="29=1-70"/>
</dbReference>
<dbReference type="PDB" id="5U9G">
    <property type="method" value="EM"/>
    <property type="resolution" value="3.20 A"/>
    <property type="chains" value="29=1-70"/>
</dbReference>
<dbReference type="PDB" id="5UYK">
    <property type="method" value="EM"/>
    <property type="resolution" value="3.90 A"/>
    <property type="chains" value="29=1-66"/>
</dbReference>
<dbReference type="PDB" id="5UYL">
    <property type="method" value="EM"/>
    <property type="resolution" value="3.60 A"/>
    <property type="chains" value="29=1-66"/>
</dbReference>
<dbReference type="PDB" id="5UYM">
    <property type="method" value="EM"/>
    <property type="resolution" value="3.20 A"/>
    <property type="chains" value="29=1-66"/>
</dbReference>
<dbReference type="PDB" id="5UYN">
    <property type="method" value="EM"/>
    <property type="resolution" value="4.00 A"/>
    <property type="chains" value="29=1-66"/>
</dbReference>
<dbReference type="PDB" id="5UYP">
    <property type="method" value="EM"/>
    <property type="resolution" value="3.90 A"/>
    <property type="chains" value="29=1-66"/>
</dbReference>
<dbReference type="PDB" id="5UYQ">
    <property type="method" value="EM"/>
    <property type="resolution" value="3.80 A"/>
    <property type="chains" value="29=1-66"/>
</dbReference>
<dbReference type="PDB" id="5WDT">
    <property type="method" value="EM"/>
    <property type="resolution" value="3.00 A"/>
    <property type="chains" value="6=1-66"/>
</dbReference>
<dbReference type="PDB" id="5WE4">
    <property type="method" value="EM"/>
    <property type="resolution" value="3.10 A"/>
    <property type="chains" value="6=1-66"/>
</dbReference>
<dbReference type="PDB" id="5WE6">
    <property type="method" value="EM"/>
    <property type="resolution" value="3.40 A"/>
    <property type="chains" value="6=1-66"/>
</dbReference>
<dbReference type="PDB" id="5WF0">
    <property type="method" value="EM"/>
    <property type="resolution" value="3.60 A"/>
    <property type="chains" value="6=1-66"/>
</dbReference>
<dbReference type="PDB" id="5WFK">
    <property type="method" value="EM"/>
    <property type="resolution" value="3.40 A"/>
    <property type="chains" value="6=1-66"/>
</dbReference>
<dbReference type="PDB" id="5WFS">
    <property type="method" value="EM"/>
    <property type="resolution" value="3.00 A"/>
    <property type="chains" value="6=1-66"/>
</dbReference>
<dbReference type="PDB" id="6BU8">
    <property type="method" value="EM"/>
    <property type="resolution" value="3.50 A"/>
    <property type="chains" value="29=1-66"/>
</dbReference>
<dbReference type="PDB" id="6BY1">
    <property type="method" value="X-ray"/>
    <property type="resolution" value="3.94 A"/>
    <property type="chains" value="C0/D0=10-48"/>
</dbReference>
<dbReference type="PDB" id="6C4I">
    <property type="method" value="EM"/>
    <property type="resolution" value="3.24 A"/>
    <property type="chains" value="1=1-70"/>
</dbReference>
<dbReference type="PDB" id="6DNC">
    <property type="method" value="EM"/>
    <property type="resolution" value="3.70 A"/>
    <property type="chains" value="EA=1-70"/>
</dbReference>
<dbReference type="PDB" id="6ENF">
    <property type="method" value="EM"/>
    <property type="resolution" value="3.20 A"/>
    <property type="chains" value="6=1-66"/>
</dbReference>
<dbReference type="PDB" id="6ENJ">
    <property type="method" value="EM"/>
    <property type="resolution" value="3.70 A"/>
    <property type="chains" value="6=1-66"/>
</dbReference>
<dbReference type="PDB" id="6ENU">
    <property type="method" value="EM"/>
    <property type="resolution" value="3.10 A"/>
    <property type="chains" value="6=1-66"/>
</dbReference>
<dbReference type="PDB" id="6H4N">
    <property type="method" value="EM"/>
    <property type="resolution" value="3.00 A"/>
    <property type="chains" value="6=1-66"/>
</dbReference>
<dbReference type="PDB" id="6H58">
    <property type="method" value="EM"/>
    <property type="resolution" value="7.90 A"/>
    <property type="chains" value="6/66=1-66"/>
</dbReference>
<dbReference type="PDB" id="6HRM">
    <property type="method" value="EM"/>
    <property type="resolution" value="2.96 A"/>
    <property type="chains" value="a=1-66"/>
</dbReference>
<dbReference type="PDB" id="6O9J">
    <property type="method" value="EM"/>
    <property type="resolution" value="3.90 A"/>
    <property type="chains" value="Z=1-70"/>
</dbReference>
<dbReference type="PDB" id="6OM6">
    <property type="method" value="EM"/>
    <property type="resolution" value="3.10 A"/>
    <property type="chains" value="a=1-70"/>
</dbReference>
<dbReference type="PDB" id="6ORE">
    <property type="method" value="EM"/>
    <property type="resolution" value="2.90 A"/>
    <property type="chains" value="a=1-66"/>
</dbReference>
<dbReference type="PDB" id="6OSK">
    <property type="method" value="EM"/>
    <property type="resolution" value="3.60 A"/>
    <property type="chains" value="a=1-66"/>
</dbReference>
<dbReference type="PDB" id="6OSQ">
    <property type="method" value="EM"/>
    <property type="resolution" value="3.50 A"/>
    <property type="chains" value="a=1-66"/>
</dbReference>
<dbReference type="PDB" id="6OT3">
    <property type="method" value="EM"/>
    <property type="resolution" value="3.90 A"/>
    <property type="chains" value="a=1-66"/>
</dbReference>
<dbReference type="PDB" id="6OUO">
    <property type="method" value="EM"/>
    <property type="resolution" value="3.70 A"/>
    <property type="chains" value="a=1-66"/>
</dbReference>
<dbReference type="PDB" id="6Q97">
    <property type="method" value="EM"/>
    <property type="resolution" value="3.90 A"/>
    <property type="chains" value="a=1-66"/>
</dbReference>
<dbReference type="PDB" id="6Q98">
    <property type="method" value="EM"/>
    <property type="resolution" value="4.30 A"/>
    <property type="chains" value="a=1-70"/>
</dbReference>
<dbReference type="PDB" id="6Q9A">
    <property type="method" value="EM"/>
    <property type="resolution" value="3.70 A"/>
    <property type="chains" value="a=1-66"/>
</dbReference>
<dbReference type="PDB" id="6SZS">
    <property type="method" value="EM"/>
    <property type="resolution" value="3.06 A"/>
    <property type="chains" value="5=1-70"/>
</dbReference>
<dbReference type="PDB" id="6TBV">
    <property type="method" value="EM"/>
    <property type="resolution" value="2.70 A"/>
    <property type="chains" value="L311=1-70"/>
</dbReference>
<dbReference type="PDB" id="6TC3">
    <property type="method" value="EM"/>
    <property type="resolution" value="2.70 A"/>
    <property type="chains" value="L311=1-70"/>
</dbReference>
<dbReference type="PDB" id="6VU3">
    <property type="method" value="EM"/>
    <property type="resolution" value="3.70 A"/>
    <property type="chains" value="g=1-66"/>
</dbReference>
<dbReference type="PDB" id="6VYQ">
    <property type="method" value="EM"/>
    <property type="resolution" value="3.70 A"/>
    <property type="chains" value="g=1-70"/>
</dbReference>
<dbReference type="PDB" id="6VYR">
    <property type="method" value="EM"/>
    <property type="resolution" value="3.80 A"/>
    <property type="chains" value="g=1-70"/>
</dbReference>
<dbReference type="PDB" id="6VYS">
    <property type="method" value="EM"/>
    <property type="resolution" value="3.70 A"/>
    <property type="chains" value="g=1-70"/>
</dbReference>
<dbReference type="PDB" id="6VYT">
    <property type="method" value="EM"/>
    <property type="resolution" value="14.00 A"/>
    <property type="chains" value="g=1-70"/>
</dbReference>
<dbReference type="PDB" id="6VYU">
    <property type="method" value="EM"/>
    <property type="resolution" value="7.00 A"/>
    <property type="chains" value="g=1-70"/>
</dbReference>
<dbReference type="PDB" id="6VYW">
    <property type="method" value="EM"/>
    <property type="resolution" value="7.00 A"/>
    <property type="chains" value="g=1-70"/>
</dbReference>
<dbReference type="PDB" id="6VYX">
    <property type="method" value="EM"/>
    <property type="resolution" value="9.90 A"/>
    <property type="chains" value="g=1-70"/>
</dbReference>
<dbReference type="PDB" id="6VYY">
    <property type="method" value="EM"/>
    <property type="resolution" value="9.90 A"/>
    <property type="chains" value="g=1-70"/>
</dbReference>
<dbReference type="PDB" id="6VYZ">
    <property type="method" value="EM"/>
    <property type="resolution" value="9.90 A"/>
    <property type="chains" value="g=1-70"/>
</dbReference>
<dbReference type="PDB" id="6VZ2">
    <property type="method" value="EM"/>
    <property type="resolution" value="10.00 A"/>
    <property type="chains" value="g=1-70"/>
</dbReference>
<dbReference type="PDB" id="6VZ3">
    <property type="method" value="EM"/>
    <property type="resolution" value="8.90 A"/>
    <property type="chains" value="g=1-66"/>
</dbReference>
<dbReference type="PDB" id="6VZ5">
    <property type="method" value="EM"/>
    <property type="resolution" value="8.90 A"/>
    <property type="chains" value="g=1-70"/>
</dbReference>
<dbReference type="PDB" id="6VZ7">
    <property type="method" value="EM"/>
    <property type="resolution" value="7.00 A"/>
    <property type="chains" value="g=1-66"/>
</dbReference>
<dbReference type="PDB" id="6VZJ">
    <property type="method" value="EM"/>
    <property type="resolution" value="4.10 A"/>
    <property type="chains" value="g=1-66"/>
</dbReference>
<dbReference type="PDB" id="6WNT">
    <property type="method" value="EM"/>
    <property type="resolution" value="3.10 A"/>
    <property type="chains" value="A=1-70"/>
</dbReference>
<dbReference type="PDB" id="6WNV">
    <property type="method" value="EM"/>
    <property type="resolution" value="3.50 A"/>
    <property type="chains" value="A=1-70"/>
</dbReference>
<dbReference type="PDB" id="6WNW">
    <property type="method" value="EM"/>
    <property type="resolution" value="3.20 A"/>
    <property type="chains" value="A=1-70"/>
</dbReference>
<dbReference type="PDB" id="6X6T">
    <property type="method" value="EM"/>
    <property type="resolution" value="3.20 A"/>
    <property type="chains" value="g=1-70"/>
</dbReference>
<dbReference type="PDB" id="6X7F">
    <property type="method" value="EM"/>
    <property type="resolution" value="3.50 A"/>
    <property type="chains" value="g=1-70"/>
</dbReference>
<dbReference type="PDB" id="6X7K">
    <property type="method" value="EM"/>
    <property type="resolution" value="3.10 A"/>
    <property type="chains" value="g=1-70"/>
</dbReference>
<dbReference type="PDB" id="6X9Q">
    <property type="method" value="EM"/>
    <property type="resolution" value="4.80 A"/>
    <property type="chains" value="g=1-70"/>
</dbReference>
<dbReference type="PDB" id="6XDQ">
    <property type="method" value="EM"/>
    <property type="resolution" value="3.70 A"/>
    <property type="chains" value="g=1-70"/>
</dbReference>
<dbReference type="PDB" id="6XDR">
    <property type="method" value="EM"/>
    <property type="resolution" value="4.70 A"/>
    <property type="chains" value="g=1-70"/>
</dbReference>
<dbReference type="PDB" id="6XGF">
    <property type="method" value="EM"/>
    <property type="resolution" value="5.00 A"/>
    <property type="chains" value="g=1-70"/>
</dbReference>
<dbReference type="PDB" id="6XII">
    <property type="method" value="EM"/>
    <property type="resolution" value="7.00 A"/>
    <property type="chains" value="g=1-70"/>
</dbReference>
<dbReference type="PDB" id="6XIJ">
    <property type="method" value="EM"/>
    <property type="resolution" value="8.00 A"/>
    <property type="chains" value="g=1-70"/>
</dbReference>
<dbReference type="PDB" id="6Y69">
    <property type="method" value="EM"/>
    <property type="resolution" value="2.86 A"/>
    <property type="chains" value="6=1-66"/>
</dbReference>
<dbReference type="PDB" id="6ZTJ">
    <property type="method" value="EM"/>
    <property type="resolution" value="3.40 A"/>
    <property type="chains" value="B7=1-70"/>
</dbReference>
<dbReference type="PDB" id="6ZTO">
    <property type="method" value="EM"/>
    <property type="resolution" value="3.00 A"/>
    <property type="chains" value="B7=1-70"/>
</dbReference>
<dbReference type="PDB" id="6ZTP">
    <property type="method" value="EM"/>
    <property type="resolution" value="3.00 A"/>
    <property type="chains" value="B7=1-70"/>
</dbReference>
<dbReference type="PDB" id="6ZU1">
    <property type="method" value="EM"/>
    <property type="resolution" value="3.00 A"/>
    <property type="chains" value="B7=1-70"/>
</dbReference>
<dbReference type="PDB" id="7AC7">
    <property type="method" value="EM"/>
    <property type="resolution" value="3.08 A"/>
    <property type="chains" value="a=1-66"/>
</dbReference>
<dbReference type="PDB" id="7ACJ">
    <property type="method" value="EM"/>
    <property type="resolution" value="3.20 A"/>
    <property type="chains" value="a=1-65"/>
</dbReference>
<dbReference type="PDB" id="7ACR">
    <property type="method" value="EM"/>
    <property type="resolution" value="3.44 A"/>
    <property type="chains" value="a=1-65"/>
</dbReference>
<dbReference type="PDB" id="7B5K">
    <property type="method" value="EM"/>
    <property type="resolution" value="2.90 A"/>
    <property type="chains" value="5=1-66"/>
</dbReference>
<dbReference type="PDB" id="7BL2">
    <property type="method" value="EM"/>
    <property type="resolution" value="3.70 A"/>
    <property type="chains" value="b=1-70"/>
</dbReference>
<dbReference type="PDB" id="7BL3">
    <property type="method" value="EM"/>
    <property type="resolution" value="3.50 A"/>
    <property type="chains" value="b=1-70"/>
</dbReference>
<dbReference type="PDB" id="7BL4">
    <property type="method" value="EM"/>
    <property type="resolution" value="2.40 A"/>
    <property type="chains" value="d=1-70"/>
</dbReference>
<dbReference type="PDB" id="7BL5">
    <property type="method" value="EM"/>
    <property type="resolution" value="3.30 A"/>
    <property type="chains" value="b=1-70"/>
</dbReference>
<dbReference type="PDB" id="7BL6">
    <property type="method" value="EM"/>
    <property type="resolution" value="4.00 A"/>
    <property type="chains" value="d=1-70"/>
</dbReference>
<dbReference type="PDB" id="7D6Z">
    <property type="method" value="EM"/>
    <property type="resolution" value="3.40 A"/>
    <property type="chains" value="6=1-70"/>
</dbReference>
<dbReference type="PDB" id="7K00">
    <property type="method" value="EM"/>
    <property type="resolution" value="1.98 A"/>
    <property type="chains" value="4=1-70"/>
</dbReference>
<dbReference type="PDB" id="7K50">
    <property type="method" value="EM"/>
    <property type="resolution" value="3.40 A"/>
    <property type="chains" value="A=1-66"/>
</dbReference>
<dbReference type="PDB" id="7K51">
    <property type="method" value="EM"/>
    <property type="resolution" value="3.50 A"/>
    <property type="chains" value="A=1-66"/>
</dbReference>
<dbReference type="PDB" id="7K52">
    <property type="method" value="EM"/>
    <property type="resolution" value="3.40 A"/>
    <property type="chains" value="A=1-66"/>
</dbReference>
<dbReference type="PDB" id="7K53">
    <property type="method" value="EM"/>
    <property type="resolution" value="3.20 A"/>
    <property type="chains" value="A=1-66"/>
</dbReference>
<dbReference type="PDB" id="7K54">
    <property type="method" value="EM"/>
    <property type="resolution" value="3.20 A"/>
    <property type="chains" value="A=1-66"/>
</dbReference>
<dbReference type="PDB" id="7K55">
    <property type="method" value="EM"/>
    <property type="resolution" value="3.30 A"/>
    <property type="chains" value="A=1-66"/>
</dbReference>
<dbReference type="PDB" id="7LV0">
    <property type="method" value="EM"/>
    <property type="resolution" value="3.20 A"/>
    <property type="chains" value="A=1-66"/>
</dbReference>
<dbReference type="PDB" id="7M5D">
    <property type="method" value="EM"/>
    <property type="resolution" value="2.80 A"/>
    <property type="chains" value="a=1-66"/>
</dbReference>
<dbReference type="PDB" id="7N1P">
    <property type="method" value="EM"/>
    <property type="resolution" value="2.33 A"/>
    <property type="chains" value="Le=1-70"/>
</dbReference>
<dbReference type="PDB" id="7N2C">
    <property type="method" value="EM"/>
    <property type="resolution" value="2.72 A"/>
    <property type="chains" value="Le=1-70"/>
</dbReference>
<dbReference type="PDB" id="7N2U">
    <property type="method" value="EM"/>
    <property type="resolution" value="2.53 A"/>
    <property type="chains" value="Le=1-70"/>
</dbReference>
<dbReference type="PDB" id="7N2V">
    <property type="method" value="EM"/>
    <property type="resolution" value="2.54 A"/>
    <property type="chains" value="Le=1-70"/>
</dbReference>
<dbReference type="PDB" id="7N30">
    <property type="method" value="EM"/>
    <property type="resolution" value="2.66 A"/>
    <property type="chains" value="Le=1-70"/>
</dbReference>
<dbReference type="PDB" id="7N31">
    <property type="method" value="EM"/>
    <property type="resolution" value="2.69 A"/>
    <property type="chains" value="Le=1-70"/>
</dbReference>
<dbReference type="PDB" id="7NBU">
    <property type="method" value="EM"/>
    <property type="resolution" value="3.11 A"/>
    <property type="chains" value="4=1-66"/>
</dbReference>
<dbReference type="PDB" id="7O19">
    <property type="method" value="EM"/>
    <property type="resolution" value="2.90 A"/>
    <property type="chains" value="BI=1-70"/>
</dbReference>
<dbReference type="PDB" id="7O1A">
    <property type="method" value="EM"/>
    <property type="resolution" value="2.40 A"/>
    <property type="chains" value="BI=1-70"/>
</dbReference>
<dbReference type="PDB" id="7O1C">
    <property type="method" value="EM"/>
    <property type="resolution" value="2.60 A"/>
    <property type="chains" value="BI=1-70"/>
</dbReference>
<dbReference type="PDB" id="7OIZ">
    <property type="method" value="EM"/>
    <property type="resolution" value="2.90 A"/>
    <property type="chains" value="4=1-66"/>
</dbReference>
<dbReference type="PDB" id="7OJ0">
    <property type="method" value="EM"/>
    <property type="resolution" value="3.50 A"/>
    <property type="chains" value="4=1-66"/>
</dbReference>
<dbReference type="PDB" id="7P3K">
    <property type="method" value="EM"/>
    <property type="resolution" value="2.90 A"/>
    <property type="chains" value="4=1-70"/>
</dbReference>
<dbReference type="PDB" id="7PJU">
    <property type="method" value="EM"/>
    <property type="resolution" value="9.50 A"/>
    <property type="chains" value="6=1-70"/>
</dbReference>
<dbReference type="PDB" id="7PJV">
    <property type="method" value="EM"/>
    <property type="resolution" value="3.10 A"/>
    <property type="chains" value="6=1-70"/>
</dbReference>
<dbReference type="PDB" id="7PJY">
    <property type="method" value="EM"/>
    <property type="resolution" value="3.10 A"/>
    <property type="chains" value="6=1-70"/>
</dbReference>
<dbReference type="PDB" id="7QG8">
    <property type="method" value="EM"/>
    <property type="resolution" value="3.97 A"/>
    <property type="chains" value="L=1-70"/>
</dbReference>
<dbReference type="PDB" id="7QGH">
    <property type="method" value="EM"/>
    <property type="resolution" value="4.48 A"/>
    <property type="chains" value="L=1-70"/>
</dbReference>
<dbReference type="PDB" id="7QGN">
    <property type="method" value="EM"/>
    <property type="resolution" value="3.37 A"/>
    <property type="chains" value="L=1-70"/>
</dbReference>
<dbReference type="PDB" id="7QGR">
    <property type="method" value="EM"/>
    <property type="resolution" value="5.70 A"/>
    <property type="chains" value="L=1-70"/>
</dbReference>
<dbReference type="PDB" id="7S1G">
    <property type="method" value="EM"/>
    <property type="resolution" value="2.48 A"/>
    <property type="chains" value="Q=1-70"/>
</dbReference>
<dbReference type="PDB" id="7S1H">
    <property type="method" value="EM"/>
    <property type="resolution" value="2.35 A"/>
    <property type="chains" value="Q=1-70"/>
</dbReference>
<dbReference type="PDB" id="7S1I">
    <property type="method" value="EM"/>
    <property type="resolution" value="2.48 A"/>
    <property type="chains" value="Q=1-70"/>
</dbReference>
<dbReference type="PDB" id="7S1J">
    <property type="method" value="EM"/>
    <property type="resolution" value="2.47 A"/>
    <property type="chains" value="Q=1-70"/>
</dbReference>
<dbReference type="PDB" id="7S1K">
    <property type="method" value="EM"/>
    <property type="resolution" value="2.42 A"/>
    <property type="chains" value="Q=1-70"/>
</dbReference>
<dbReference type="PDB" id="7SA4">
    <property type="method" value="EM"/>
    <property type="resolution" value="2.55 A"/>
    <property type="chains" value="a=1-70"/>
</dbReference>
<dbReference type="PDB" id="7SSD">
    <property type="method" value="EM"/>
    <property type="resolution" value="3.30 A"/>
    <property type="chains" value="A=1-66"/>
</dbReference>
<dbReference type="PDB" id="7SSL">
    <property type="method" value="EM"/>
    <property type="resolution" value="3.80 A"/>
    <property type="chains" value="A=1-66"/>
</dbReference>
<dbReference type="PDB" id="7SSO">
    <property type="method" value="EM"/>
    <property type="resolution" value="3.20 A"/>
    <property type="chains" value="A=1-66"/>
</dbReference>
<dbReference type="PDB" id="7ST2">
    <property type="method" value="EM"/>
    <property type="resolution" value="2.90 A"/>
    <property type="chains" value="A=1-66"/>
</dbReference>
<dbReference type="PDB" id="7ST6">
    <property type="method" value="EM"/>
    <property type="resolution" value="3.00 A"/>
    <property type="chains" value="A=1-66"/>
</dbReference>
<dbReference type="PDB" id="7ST7">
    <property type="method" value="EM"/>
    <property type="resolution" value="3.20 A"/>
    <property type="chains" value="A=1-66"/>
</dbReference>
<dbReference type="PDB" id="7TOS">
    <property type="method" value="EM"/>
    <property type="resolution" value="2.90 A"/>
    <property type="chains" value="L31=1-66"/>
</dbReference>
<dbReference type="PDB" id="7UG7">
    <property type="method" value="EM"/>
    <property type="resolution" value="2.58 A"/>
    <property type="chains" value="Le=1-70"/>
</dbReference>
<dbReference type="PDB" id="7Y7C">
    <property type="method" value="EM"/>
    <property type="resolution" value="2.51 A"/>
    <property type="chains" value="4=1-70"/>
</dbReference>
<dbReference type="PDB" id="7Y7D">
    <property type="method" value="EM"/>
    <property type="resolution" value="2.58 A"/>
    <property type="chains" value="4=1-70"/>
</dbReference>
<dbReference type="PDB" id="7Y7E">
    <property type="method" value="EM"/>
    <property type="resolution" value="2.41 A"/>
    <property type="chains" value="4=1-70"/>
</dbReference>
<dbReference type="PDB" id="7Y7F">
    <property type="method" value="EM"/>
    <property type="resolution" value="2.43 A"/>
    <property type="chains" value="4=1-70"/>
</dbReference>
<dbReference type="PDB" id="7Y7G">
    <property type="method" value="EM"/>
    <property type="resolution" value="2.34 A"/>
    <property type="chains" value="4=1-70"/>
</dbReference>
<dbReference type="PDB" id="7Y7H">
    <property type="method" value="EM"/>
    <property type="resolution" value="2.51 A"/>
    <property type="chains" value="4=1-70"/>
</dbReference>
<dbReference type="PDB" id="7ZTA">
    <property type="method" value="EM"/>
    <property type="resolution" value="2.70 A"/>
    <property type="chains" value="L311=1-66"/>
</dbReference>
<dbReference type="PDB" id="8A3L">
    <property type="method" value="EM"/>
    <property type="resolution" value="3.42 A"/>
    <property type="chains" value="4=1-70"/>
</dbReference>
<dbReference type="PDB" id="8AKN">
    <property type="method" value="EM"/>
    <property type="resolution" value="2.30 A"/>
    <property type="chains" value="4=1-70"/>
</dbReference>
<dbReference type="PDB" id="8AM9">
    <property type="method" value="EM"/>
    <property type="resolution" value="2.80 A"/>
    <property type="chains" value="4=1-70"/>
</dbReference>
<dbReference type="PDB" id="8ANA">
    <property type="method" value="EM"/>
    <property type="resolution" value="2.10 A"/>
    <property type="chains" value="4=1-70"/>
</dbReference>
<dbReference type="PDB" id="8AP4">
    <property type="method" value="EM"/>
    <property type="resolution" value="3.00 A"/>
    <property type="chains" value="4=1-70"/>
</dbReference>
<dbReference type="PDB" id="8AYE">
    <property type="method" value="EM"/>
    <property type="resolution" value="1.96 A"/>
    <property type="chains" value="4=1-70"/>
</dbReference>
<dbReference type="PDB" id="8BF7">
    <property type="method" value="EM"/>
    <property type="resolution" value="2.33 A"/>
    <property type="chains" value="X=1-70"/>
</dbReference>
<dbReference type="PDB" id="8BGH">
    <property type="method" value="EM"/>
    <property type="resolution" value="2.88 A"/>
    <property type="chains" value="X=1-70"/>
</dbReference>
<dbReference type="PDB" id="8BHN">
    <property type="method" value="EM"/>
    <property type="resolution" value="2.85 A"/>
    <property type="chains" value="X=1-70"/>
</dbReference>
<dbReference type="PDB" id="8BHP">
    <property type="method" value="EM"/>
    <property type="resolution" value="2.37 A"/>
    <property type="chains" value="X=1-70"/>
</dbReference>
<dbReference type="PDB" id="8BIL">
    <property type="method" value="EM"/>
    <property type="resolution" value="2.04 A"/>
    <property type="chains" value="X=1-70"/>
</dbReference>
<dbReference type="PDB" id="8BIM">
    <property type="method" value="EM"/>
    <property type="resolution" value="2.04 A"/>
    <property type="chains" value="X=1-70"/>
</dbReference>
<dbReference type="PDB" id="8CAZ">
    <property type="method" value="EM"/>
    <property type="resolution" value="2.11 A"/>
    <property type="chains" value="4=1-70"/>
</dbReference>
<dbReference type="PDB" id="8CGI">
    <property type="method" value="EM"/>
    <property type="resolution" value="1.89 A"/>
    <property type="chains" value="4=1-70"/>
</dbReference>
<dbReference type="PDB" id="8EIU">
    <property type="method" value="EM"/>
    <property type="resolution" value="2.24 A"/>
    <property type="chains" value="4=1-70"/>
</dbReference>
<dbReference type="PDB" id="8EKC">
    <property type="method" value="EM"/>
    <property type="resolution" value="2.70 A"/>
    <property type="chains" value="3=1-70"/>
</dbReference>
<dbReference type="PDB" id="8EMM">
    <property type="method" value="EM"/>
    <property type="resolution" value="2.10 A"/>
    <property type="chains" value="4=1-70"/>
</dbReference>
<dbReference type="PDB" id="8FIZ">
    <property type="method" value="EM"/>
    <property type="resolution" value="3.80 A"/>
    <property type="chains" value="AV=1-70"/>
</dbReference>
<dbReference type="PDB" id="8FTO">
    <property type="method" value="EM"/>
    <property type="resolution" value="1.85 A"/>
    <property type="chains" value="4=1-70"/>
</dbReference>
<dbReference type="PDB" id="8FZD">
    <property type="method" value="EM"/>
    <property type="resolution" value="3.10 A"/>
    <property type="chains" value="3=1-70"/>
</dbReference>
<dbReference type="PDB" id="8FZE">
    <property type="method" value="EM"/>
    <property type="resolution" value="3.00 A"/>
    <property type="chains" value="3=1-70"/>
</dbReference>
<dbReference type="PDB" id="8FZF">
    <property type="method" value="EM"/>
    <property type="resolution" value="3.20 A"/>
    <property type="chains" value="3=1-70"/>
</dbReference>
<dbReference type="PDB" id="8FZG">
    <property type="method" value="EM"/>
    <property type="resolution" value="3.10 A"/>
    <property type="chains" value="3=1-70"/>
</dbReference>
<dbReference type="PDB" id="8FZH">
    <property type="method" value="EM"/>
    <property type="resolution" value="2.90 A"/>
    <property type="chains" value="3=1-70"/>
</dbReference>
<dbReference type="PDB" id="8FZI">
    <property type="method" value="EM"/>
    <property type="resolution" value="3.10 A"/>
    <property type="chains" value="3=1-70"/>
</dbReference>
<dbReference type="PDB" id="8FZJ">
    <property type="method" value="EM"/>
    <property type="resolution" value="3.00 A"/>
    <property type="chains" value="3=1-70"/>
</dbReference>
<dbReference type="PDB" id="8G6W">
    <property type="method" value="EM"/>
    <property type="resolution" value="2.02 A"/>
    <property type="chains" value="4=1-70"/>
</dbReference>
<dbReference type="PDB" id="8G6X">
    <property type="method" value="EM"/>
    <property type="resolution" value="2.31 A"/>
    <property type="chains" value="4=1-70"/>
</dbReference>
<dbReference type="PDB" id="8G6Y">
    <property type="method" value="EM"/>
    <property type="resolution" value="2.09 A"/>
    <property type="chains" value="4=1-70"/>
</dbReference>
<dbReference type="PDB" id="8G7P">
    <property type="method" value="EM"/>
    <property type="resolution" value="2.90 A"/>
    <property type="chains" value="3=1-70"/>
</dbReference>
<dbReference type="PDB" id="8G7Q">
    <property type="method" value="EM"/>
    <property type="resolution" value="3.10 A"/>
    <property type="chains" value="3=1-70"/>
</dbReference>
<dbReference type="PDB" id="8G7R">
    <property type="method" value="EM"/>
    <property type="resolution" value="2.80 A"/>
    <property type="chains" value="3=1-70"/>
</dbReference>
<dbReference type="PDB" id="8G7S">
    <property type="method" value="EM"/>
    <property type="resolution" value="3.10 A"/>
    <property type="chains" value="3=1-70"/>
</dbReference>
<dbReference type="PDB" id="8HSP">
    <property type="method" value="EM"/>
    <property type="resolution" value="2.32 A"/>
    <property type="chains" value="4=1-70"/>
</dbReference>
<dbReference type="PDB" id="8HTZ">
    <property type="method" value="EM"/>
    <property type="resolution" value="2.40 A"/>
    <property type="chains" value="4=1-70"/>
</dbReference>
<dbReference type="PDB" id="8HU1">
    <property type="method" value="EM"/>
    <property type="resolution" value="2.69 A"/>
    <property type="chains" value="4=1-70"/>
</dbReference>
<dbReference type="PDB" id="8IFB">
    <property type="method" value="EM"/>
    <property type="resolution" value="2.43 A"/>
    <property type="chains" value="4=1-70"/>
</dbReference>
<dbReference type="PDB" id="8IFC">
    <property type="method" value="EM"/>
    <property type="resolution" value="2.90 A"/>
    <property type="chains" value="4=1-70"/>
</dbReference>
<dbReference type="PDB" id="8P16">
    <property type="method" value="EM"/>
    <property type="resolution" value="2.77 A"/>
    <property type="chains" value="a=1-70"/>
</dbReference>
<dbReference type="PDB" id="8P17">
    <property type="method" value="EM"/>
    <property type="resolution" value="2.78 A"/>
    <property type="chains" value="a=1-70"/>
</dbReference>
<dbReference type="PDB" id="8P18">
    <property type="method" value="EM"/>
    <property type="resolution" value="2.77 A"/>
    <property type="chains" value="a=1-70"/>
</dbReference>
<dbReference type="PDB" id="8PEG">
    <property type="method" value="EM"/>
    <property type="resolution" value="3.30 A"/>
    <property type="chains" value="4=1-70"/>
</dbReference>
<dbReference type="PDB" id="8PHJ">
    <property type="method" value="EM"/>
    <property type="resolution" value="3.67 A"/>
    <property type="chains" value="4=1-70"/>
</dbReference>
<dbReference type="PDB" id="8PKL">
    <property type="method" value="EM"/>
    <property type="resolution" value="3.09 A"/>
    <property type="chains" value="4=1-70"/>
</dbReference>
<dbReference type="PDB" id="8PVA">
    <property type="method" value="EM"/>
    <property type="resolution" value="4.50 A"/>
    <property type="chains" value="4=1-70"/>
</dbReference>
<dbReference type="PDB" id="8Q4F">
    <property type="method" value="EM"/>
    <property type="resolution" value="3.10 A"/>
    <property type="chains" value="4=1-70"/>
</dbReference>
<dbReference type="PDB" id="8QK7">
    <property type="method" value="EM"/>
    <property type="resolution" value="2.77 A"/>
    <property type="chains" value="a=1-70"/>
</dbReference>
<dbReference type="PDB" id="8QOA">
    <property type="method" value="EM"/>
    <property type="resolution" value="2.00 A"/>
    <property type="chains" value="4=1-70"/>
</dbReference>
<dbReference type="PDB" id="8R3V">
    <property type="method" value="EM"/>
    <property type="resolution" value="3.28 A"/>
    <property type="chains" value="4=1-70"/>
</dbReference>
<dbReference type="PDB" id="8R6C">
    <property type="method" value="EM"/>
    <property type="resolution" value="2.20 A"/>
    <property type="chains" value="4=1-70"/>
</dbReference>
<dbReference type="PDB" id="8R8M">
    <property type="method" value="EM"/>
    <property type="resolution" value="2.40 A"/>
    <property type="chains" value="4=1-70"/>
</dbReference>
<dbReference type="PDB" id="8RCL">
    <property type="method" value="EM"/>
    <property type="resolution" value="3.49 A"/>
    <property type="chains" value="4=1-70"/>
</dbReference>
<dbReference type="PDB" id="8RCM">
    <property type="method" value="EM"/>
    <property type="resolution" value="3.59 A"/>
    <property type="chains" value="4=1-70"/>
</dbReference>
<dbReference type="PDB" id="8RCS">
    <property type="method" value="EM"/>
    <property type="resolution" value="4.46 A"/>
    <property type="chains" value="4/41=1-70"/>
</dbReference>
<dbReference type="PDB" id="8RCT">
    <property type="method" value="EM"/>
    <property type="resolution" value="5.32 A"/>
    <property type="chains" value="4/41=1-70"/>
</dbReference>
<dbReference type="PDB" id="8RPY">
    <property type="method" value="EM"/>
    <property type="resolution" value="2.64 A"/>
    <property type="chains" value="6=1-66"/>
</dbReference>
<dbReference type="PDB" id="8RPZ">
    <property type="method" value="EM"/>
    <property type="resolution" value="2.44 A"/>
    <property type="chains" value="6=1-66"/>
</dbReference>
<dbReference type="PDB" id="8RQ0">
    <property type="method" value="EM"/>
    <property type="resolution" value="2.44 A"/>
    <property type="chains" value="6=1-66"/>
</dbReference>
<dbReference type="PDB" id="8RQ2">
    <property type="method" value="EM"/>
    <property type="resolution" value="2.44 A"/>
    <property type="chains" value="6=1-66"/>
</dbReference>
<dbReference type="PDB" id="8SYL">
    <property type="method" value="EM"/>
    <property type="resolution" value="2.90 A"/>
    <property type="chains" value="3=1-70"/>
</dbReference>
<dbReference type="PDB" id="8UPO">
    <property type="method" value="EM"/>
    <property type="resolution" value="5.50 A"/>
    <property type="chains" value="g=1-70"/>
</dbReference>
<dbReference type="PDB" id="8UPR">
    <property type="method" value="EM"/>
    <property type="resolution" value="5.30 A"/>
    <property type="chains" value="g=1-70"/>
</dbReference>
<dbReference type="PDB" id="8UQL">
    <property type="method" value="EM"/>
    <property type="resolution" value="3.20 A"/>
    <property type="chains" value="g=1-70"/>
</dbReference>
<dbReference type="PDB" id="8UQM">
    <property type="method" value="EM"/>
    <property type="resolution" value="5.30 A"/>
    <property type="chains" value="g=1-70"/>
</dbReference>
<dbReference type="PDB" id="8UQP">
    <property type="method" value="EM"/>
    <property type="resolution" value="3.80 A"/>
    <property type="chains" value="g=1-70"/>
</dbReference>
<dbReference type="PDB" id="8UR0">
    <property type="method" value="EM"/>
    <property type="resolution" value="3.40 A"/>
    <property type="chains" value="g=1-70"/>
</dbReference>
<dbReference type="PDB" id="8URH">
    <property type="method" value="EM"/>
    <property type="resolution" value="5.70 A"/>
    <property type="chains" value="g=1-70"/>
</dbReference>
<dbReference type="PDB" id="8URI">
    <property type="method" value="EM"/>
    <property type="resolution" value="5.30 A"/>
    <property type="chains" value="g=1-70"/>
</dbReference>
<dbReference type="PDB" id="8URX">
    <property type="method" value="EM"/>
    <property type="resolution" value="6.60 A"/>
    <property type="chains" value="g=1-70"/>
</dbReference>
<dbReference type="PDB" id="8URY">
    <property type="method" value="EM"/>
    <property type="resolution" value="3.10 A"/>
    <property type="chains" value="g=1-70"/>
</dbReference>
<dbReference type="PDB" id="8VS9">
    <property type="method" value="EM"/>
    <property type="resolution" value="3.90 A"/>
    <property type="chains" value="L31=1-45"/>
</dbReference>
<dbReference type="PDB" id="8VSA">
    <property type="method" value="EM"/>
    <property type="resolution" value="3.70 A"/>
    <property type="chains" value="L31=1-45"/>
</dbReference>
<dbReference type="PDB" id="8YUO">
    <property type="method" value="EM"/>
    <property type="resolution" value="2.25 A"/>
    <property type="chains" value="4=1-70"/>
</dbReference>
<dbReference type="PDB" id="8YUP">
    <property type="method" value="EM"/>
    <property type="resolution" value="2.39 A"/>
    <property type="chains" value="4=1-70"/>
</dbReference>
<dbReference type="PDB" id="8YUQ">
    <property type="method" value="EM"/>
    <property type="resolution" value="2.41 A"/>
    <property type="chains" value="4=1-70"/>
</dbReference>
<dbReference type="PDB" id="8YUR">
    <property type="method" value="EM"/>
    <property type="resolution" value="2.47 A"/>
    <property type="chains" value="4=1-70"/>
</dbReference>
<dbReference type="PDB" id="8YUS">
    <property type="method" value="EM"/>
    <property type="resolution" value="2.43 A"/>
    <property type="chains" value="4=1-70"/>
</dbReference>
<dbReference type="PDB" id="9AX7">
    <property type="method" value="EM"/>
    <property type="resolution" value="2.63 A"/>
    <property type="chains" value="4=1-70"/>
</dbReference>
<dbReference type="PDB" id="9CG5">
    <property type="method" value="EM"/>
    <property type="resolution" value="2.59 A"/>
    <property type="chains" value="4=1-70"/>
</dbReference>
<dbReference type="PDB" id="9CG6">
    <property type="method" value="EM"/>
    <property type="resolution" value="2.61 A"/>
    <property type="chains" value="4=1-70"/>
</dbReference>
<dbReference type="PDB" id="9CG7">
    <property type="method" value="EM"/>
    <property type="resolution" value="2.75 A"/>
    <property type="chains" value="4=1-70"/>
</dbReference>
<dbReference type="PDB" id="9FBV">
    <property type="method" value="EM"/>
    <property type="resolution" value="2.40 A"/>
    <property type="chains" value="4=1-70"/>
</dbReference>
<dbReference type="PDB" id="9GFT">
    <property type="method" value="EM"/>
    <property type="resolution" value="3.10 A"/>
    <property type="chains" value="AT/L=1-70"/>
</dbReference>
<dbReference type="PDB" id="9GGR">
    <property type="method" value="EM"/>
    <property type="resolution" value="3.20 A"/>
    <property type="chains" value="AT/L=1-70"/>
</dbReference>
<dbReference type="PDB" id="9MOR">
    <property type="method" value="EM"/>
    <property type="resolution" value="2.65 A"/>
    <property type="chains" value="a=1-70"/>
</dbReference>
<dbReference type="PDB" id="9MQ4">
    <property type="method" value="EM"/>
    <property type="resolution" value="2.78 A"/>
    <property type="chains" value="a=1-70"/>
</dbReference>
<dbReference type="PDBsum" id="2J28"/>
<dbReference type="PDBsum" id="2RDO"/>
<dbReference type="PDBsum" id="3BBX"/>
<dbReference type="PDBsum" id="3J9Y"/>
<dbReference type="PDBsum" id="3J9Z"/>
<dbReference type="PDBsum" id="3JA1"/>
<dbReference type="PDBsum" id="4V4H"/>
<dbReference type="PDBsum" id="4V4Q"/>
<dbReference type="PDBsum" id="4V5B"/>
<dbReference type="PDBsum" id="4V65"/>
<dbReference type="PDBsum" id="4V66"/>
<dbReference type="PDBsum" id="4V6K"/>
<dbReference type="PDBsum" id="4V6L"/>
<dbReference type="PDBsum" id="4V6N"/>
<dbReference type="PDBsum" id="4V6O"/>
<dbReference type="PDBsum" id="4V6P"/>
<dbReference type="PDBsum" id="4V6Q"/>
<dbReference type="PDBsum" id="4V6R"/>
<dbReference type="PDBsum" id="4V6S"/>
<dbReference type="PDBsum" id="4V6V"/>
<dbReference type="PDBsum" id="5AFI"/>
<dbReference type="PDBsum" id="5AKA"/>
<dbReference type="PDBsum" id="5IQR"/>
<dbReference type="PDBsum" id="5KCS"/>
<dbReference type="PDBsum" id="5KPS"/>
<dbReference type="PDBsum" id="5KPV"/>
<dbReference type="PDBsum" id="5KPW"/>
<dbReference type="PDBsum" id="5KPX"/>
<dbReference type="PDBsum" id="5L3P"/>
<dbReference type="PDBsum" id="5LZA"/>
<dbReference type="PDBsum" id="5LZB"/>
<dbReference type="PDBsum" id="5LZC"/>
<dbReference type="PDBsum" id="5LZD"/>
<dbReference type="PDBsum" id="5LZE"/>
<dbReference type="PDBsum" id="5LZF"/>
<dbReference type="PDBsum" id="5MDV"/>
<dbReference type="PDBsum" id="5MDW"/>
<dbReference type="PDBsum" id="5MDY"/>
<dbReference type="PDBsum" id="5MDZ"/>
<dbReference type="PDBsum" id="5MGP"/>
<dbReference type="PDBsum" id="5NP6"/>
<dbReference type="PDBsum" id="5NWY"/>
<dbReference type="PDBsum" id="5O2R"/>
<dbReference type="PDBsum" id="5U9F"/>
<dbReference type="PDBsum" id="5U9G"/>
<dbReference type="PDBsum" id="5UYK"/>
<dbReference type="PDBsum" id="5UYL"/>
<dbReference type="PDBsum" id="5UYM"/>
<dbReference type="PDBsum" id="5UYN"/>
<dbReference type="PDBsum" id="5UYP"/>
<dbReference type="PDBsum" id="5UYQ"/>
<dbReference type="PDBsum" id="5WDT"/>
<dbReference type="PDBsum" id="5WE4"/>
<dbReference type="PDBsum" id="5WE6"/>
<dbReference type="PDBsum" id="5WF0"/>
<dbReference type="PDBsum" id="5WFK"/>
<dbReference type="PDBsum" id="5WFS"/>
<dbReference type="PDBsum" id="6BU8"/>
<dbReference type="PDBsum" id="6BY1"/>
<dbReference type="PDBsum" id="6C4I"/>
<dbReference type="PDBsum" id="6DNC"/>
<dbReference type="PDBsum" id="6ENF"/>
<dbReference type="PDBsum" id="6ENJ"/>
<dbReference type="PDBsum" id="6ENU"/>
<dbReference type="PDBsum" id="6H4N"/>
<dbReference type="PDBsum" id="6H58"/>
<dbReference type="PDBsum" id="6HRM"/>
<dbReference type="PDBsum" id="6O9J"/>
<dbReference type="PDBsum" id="6OM6"/>
<dbReference type="PDBsum" id="6ORE"/>
<dbReference type="PDBsum" id="6OSK"/>
<dbReference type="PDBsum" id="6OSQ"/>
<dbReference type="PDBsum" id="6OT3"/>
<dbReference type="PDBsum" id="6OUO"/>
<dbReference type="PDBsum" id="6Q97"/>
<dbReference type="PDBsum" id="6Q98"/>
<dbReference type="PDBsum" id="6Q9A"/>
<dbReference type="PDBsum" id="6SZS"/>
<dbReference type="PDBsum" id="6TBV"/>
<dbReference type="PDBsum" id="6TC3"/>
<dbReference type="PDBsum" id="6VU3"/>
<dbReference type="PDBsum" id="6VYQ"/>
<dbReference type="PDBsum" id="6VYR"/>
<dbReference type="PDBsum" id="6VYS"/>
<dbReference type="PDBsum" id="6VYT"/>
<dbReference type="PDBsum" id="6VYU"/>
<dbReference type="PDBsum" id="6VYW"/>
<dbReference type="PDBsum" id="6VYX"/>
<dbReference type="PDBsum" id="6VYY"/>
<dbReference type="PDBsum" id="6VYZ"/>
<dbReference type="PDBsum" id="6VZ2"/>
<dbReference type="PDBsum" id="6VZ3"/>
<dbReference type="PDBsum" id="6VZ5"/>
<dbReference type="PDBsum" id="6VZ7"/>
<dbReference type="PDBsum" id="6VZJ"/>
<dbReference type="PDBsum" id="6WNT"/>
<dbReference type="PDBsum" id="6WNV"/>
<dbReference type="PDBsum" id="6WNW"/>
<dbReference type="PDBsum" id="6X6T"/>
<dbReference type="PDBsum" id="6X7F"/>
<dbReference type="PDBsum" id="6X7K"/>
<dbReference type="PDBsum" id="6X9Q"/>
<dbReference type="PDBsum" id="6XDQ"/>
<dbReference type="PDBsum" id="6XDR"/>
<dbReference type="PDBsum" id="6XGF"/>
<dbReference type="PDBsum" id="6XII"/>
<dbReference type="PDBsum" id="6XIJ"/>
<dbReference type="PDBsum" id="6Y69"/>
<dbReference type="PDBsum" id="6ZTJ"/>
<dbReference type="PDBsum" id="6ZTO"/>
<dbReference type="PDBsum" id="6ZTP"/>
<dbReference type="PDBsum" id="6ZU1"/>
<dbReference type="PDBsum" id="7AC7"/>
<dbReference type="PDBsum" id="7ACJ"/>
<dbReference type="PDBsum" id="7ACR"/>
<dbReference type="PDBsum" id="7B5K"/>
<dbReference type="PDBsum" id="7BL2"/>
<dbReference type="PDBsum" id="7BL3"/>
<dbReference type="PDBsum" id="7BL4"/>
<dbReference type="PDBsum" id="7BL5"/>
<dbReference type="PDBsum" id="7BL6"/>
<dbReference type="PDBsum" id="7D6Z"/>
<dbReference type="PDBsum" id="7K00"/>
<dbReference type="PDBsum" id="7K50"/>
<dbReference type="PDBsum" id="7K51"/>
<dbReference type="PDBsum" id="7K52"/>
<dbReference type="PDBsum" id="7K53"/>
<dbReference type="PDBsum" id="7K54"/>
<dbReference type="PDBsum" id="7K55"/>
<dbReference type="PDBsum" id="7LV0"/>
<dbReference type="PDBsum" id="7M5D"/>
<dbReference type="PDBsum" id="7N1P"/>
<dbReference type="PDBsum" id="7N2C"/>
<dbReference type="PDBsum" id="7N2U"/>
<dbReference type="PDBsum" id="7N2V"/>
<dbReference type="PDBsum" id="7N30"/>
<dbReference type="PDBsum" id="7N31"/>
<dbReference type="PDBsum" id="7NBU"/>
<dbReference type="PDBsum" id="7O19"/>
<dbReference type="PDBsum" id="7O1A"/>
<dbReference type="PDBsum" id="7O1C"/>
<dbReference type="PDBsum" id="7OIZ"/>
<dbReference type="PDBsum" id="7OJ0"/>
<dbReference type="PDBsum" id="7P3K"/>
<dbReference type="PDBsum" id="7PJU"/>
<dbReference type="PDBsum" id="7PJV"/>
<dbReference type="PDBsum" id="7PJY"/>
<dbReference type="PDBsum" id="7QG8"/>
<dbReference type="PDBsum" id="7QGH"/>
<dbReference type="PDBsum" id="7QGN"/>
<dbReference type="PDBsum" id="7QGR"/>
<dbReference type="PDBsum" id="7S1G"/>
<dbReference type="PDBsum" id="7S1H"/>
<dbReference type="PDBsum" id="7S1I"/>
<dbReference type="PDBsum" id="7S1J"/>
<dbReference type="PDBsum" id="7S1K"/>
<dbReference type="PDBsum" id="7SA4"/>
<dbReference type="PDBsum" id="7SSD"/>
<dbReference type="PDBsum" id="7SSL"/>
<dbReference type="PDBsum" id="7SSO"/>
<dbReference type="PDBsum" id="7ST2"/>
<dbReference type="PDBsum" id="7ST6"/>
<dbReference type="PDBsum" id="7ST7"/>
<dbReference type="PDBsum" id="7TOS"/>
<dbReference type="PDBsum" id="7UG7"/>
<dbReference type="PDBsum" id="7Y7C"/>
<dbReference type="PDBsum" id="7Y7D"/>
<dbReference type="PDBsum" id="7Y7E"/>
<dbReference type="PDBsum" id="7Y7F"/>
<dbReference type="PDBsum" id="7Y7G"/>
<dbReference type="PDBsum" id="7Y7H"/>
<dbReference type="PDBsum" id="7ZTA"/>
<dbReference type="PDBsum" id="8A3L"/>
<dbReference type="PDBsum" id="8AKN"/>
<dbReference type="PDBsum" id="8AM9"/>
<dbReference type="PDBsum" id="8ANA"/>
<dbReference type="PDBsum" id="8AP4"/>
<dbReference type="PDBsum" id="8AYE"/>
<dbReference type="PDBsum" id="8BF7"/>
<dbReference type="PDBsum" id="8BGH"/>
<dbReference type="PDBsum" id="8BHN"/>
<dbReference type="PDBsum" id="8BHP"/>
<dbReference type="PDBsum" id="8BIL"/>
<dbReference type="PDBsum" id="8BIM"/>
<dbReference type="PDBsum" id="8CAZ"/>
<dbReference type="PDBsum" id="8CGI"/>
<dbReference type="PDBsum" id="8EIU"/>
<dbReference type="PDBsum" id="8EKC"/>
<dbReference type="PDBsum" id="8EMM"/>
<dbReference type="PDBsum" id="8FIZ"/>
<dbReference type="PDBsum" id="8FTO"/>
<dbReference type="PDBsum" id="8FZD"/>
<dbReference type="PDBsum" id="8FZE"/>
<dbReference type="PDBsum" id="8FZF"/>
<dbReference type="PDBsum" id="8FZG"/>
<dbReference type="PDBsum" id="8FZH"/>
<dbReference type="PDBsum" id="8FZI"/>
<dbReference type="PDBsum" id="8FZJ"/>
<dbReference type="PDBsum" id="8G6W"/>
<dbReference type="PDBsum" id="8G6X"/>
<dbReference type="PDBsum" id="8G6Y"/>
<dbReference type="PDBsum" id="8G7P"/>
<dbReference type="PDBsum" id="8G7Q"/>
<dbReference type="PDBsum" id="8G7R"/>
<dbReference type="PDBsum" id="8G7S"/>
<dbReference type="PDBsum" id="8HSP"/>
<dbReference type="PDBsum" id="8HTZ"/>
<dbReference type="PDBsum" id="8HU1"/>
<dbReference type="PDBsum" id="8IFB"/>
<dbReference type="PDBsum" id="8IFC"/>
<dbReference type="PDBsum" id="8P16"/>
<dbReference type="PDBsum" id="8P17"/>
<dbReference type="PDBsum" id="8P18"/>
<dbReference type="PDBsum" id="8PEG"/>
<dbReference type="PDBsum" id="8PHJ"/>
<dbReference type="PDBsum" id="8PKL"/>
<dbReference type="PDBsum" id="8PVA"/>
<dbReference type="PDBsum" id="8Q4F"/>
<dbReference type="PDBsum" id="8QK7"/>
<dbReference type="PDBsum" id="8QOA"/>
<dbReference type="PDBsum" id="8R3V"/>
<dbReference type="PDBsum" id="8R6C"/>
<dbReference type="PDBsum" id="8R8M"/>
<dbReference type="PDBsum" id="8RCL"/>
<dbReference type="PDBsum" id="8RCM"/>
<dbReference type="PDBsum" id="8RCS"/>
<dbReference type="PDBsum" id="8RCT"/>
<dbReference type="PDBsum" id="8RPY"/>
<dbReference type="PDBsum" id="8RPZ"/>
<dbReference type="PDBsum" id="8RQ0"/>
<dbReference type="PDBsum" id="8RQ2"/>
<dbReference type="PDBsum" id="8SYL"/>
<dbReference type="PDBsum" id="8UPO"/>
<dbReference type="PDBsum" id="8UPR"/>
<dbReference type="PDBsum" id="8UQL"/>
<dbReference type="PDBsum" id="8UQM"/>
<dbReference type="PDBsum" id="8UQP"/>
<dbReference type="PDBsum" id="8UR0"/>
<dbReference type="PDBsum" id="8URH"/>
<dbReference type="PDBsum" id="8URI"/>
<dbReference type="PDBsum" id="8URX"/>
<dbReference type="PDBsum" id="8URY"/>
<dbReference type="PDBsum" id="8VS9"/>
<dbReference type="PDBsum" id="8VSA"/>
<dbReference type="PDBsum" id="8YUO"/>
<dbReference type="PDBsum" id="8YUP"/>
<dbReference type="PDBsum" id="8YUQ"/>
<dbReference type="PDBsum" id="8YUR"/>
<dbReference type="PDBsum" id="8YUS"/>
<dbReference type="PDBsum" id="9AX7"/>
<dbReference type="PDBsum" id="9CG5"/>
<dbReference type="PDBsum" id="9CG6"/>
<dbReference type="PDBsum" id="9CG7"/>
<dbReference type="PDBsum" id="9FBV"/>
<dbReference type="PDBsum" id="9GFT"/>
<dbReference type="PDBsum" id="9GGR"/>
<dbReference type="PDBsum" id="9MOR"/>
<dbReference type="PDBsum" id="9MQ4"/>
<dbReference type="EMDB" id="EMD-0137"/>
<dbReference type="EMDB" id="EMD-0139"/>
<dbReference type="EMDB" id="EMD-0261"/>
<dbReference type="EMDB" id="EMD-10353"/>
<dbReference type="EMDB" id="EMD-10453"/>
<dbReference type="EMDB" id="EMD-10458"/>
<dbReference type="EMDB" id="EMD-10705"/>
<dbReference type="EMDB" id="EMD-11713"/>
<dbReference type="EMDB" id="EMD-11717"/>
<dbReference type="EMDB" id="EMD-11718"/>
<dbReference type="EMDB" id="EMD-12035"/>
<dbReference type="EMDB" id="EMD-12215"/>
<dbReference type="EMDB" id="EMD-12216"/>
<dbReference type="EMDB" id="EMD-12217"/>
<dbReference type="EMDB" id="EMD-12218"/>
<dbReference type="EMDB" id="EMD-12219"/>
<dbReference type="EMDB" id="EMD-12261"/>
<dbReference type="EMDB" id="EMD-12693"/>
<dbReference type="EMDB" id="EMD-12694"/>
<dbReference type="EMDB" id="EMD-12695"/>
<dbReference type="EMDB" id="EMD-13180"/>
<dbReference type="EMDB" id="EMD-13461"/>
<dbReference type="EMDB" id="EMD-13464"/>
<dbReference type="EMDB" id="EMD-13952"/>
<dbReference type="EMDB" id="EMD-13955"/>
<dbReference type="EMDB" id="EMD-14956"/>
<dbReference type="EMDB" id="EMD-15116"/>
<dbReference type="EMDB" id="EMD-15558"/>
<dbReference type="EMDB" id="EMD-15712"/>
<dbReference type="EMDB" id="EMD-16015"/>
<dbReference type="EMDB" id="EMD-16031"/>
<dbReference type="EMDB" id="EMD-16062"/>
<dbReference type="EMDB" id="EMD-16065"/>
<dbReference type="EMDB" id="EMD-16081"/>
<dbReference type="EMDB" id="EMD-16082"/>
<dbReference type="EMDB" id="EMD-16536"/>
<dbReference type="EMDB" id="EMD-16644"/>
<dbReference type="EMDB" id="EMD-17346"/>
<dbReference type="EMDB" id="EMD-17347"/>
<dbReference type="EMDB" id="EMD-17348"/>
<dbReference type="EMDB" id="EMD-17631"/>
<dbReference type="EMDB" id="EMD-17667"/>
<dbReference type="EMDB" id="EMD-17743"/>
<dbReference type="EMDB" id="EMD-17959"/>
<dbReference type="EMDB" id="EMD-18145"/>
<dbReference type="EMDB" id="EMD-18458"/>
<dbReference type="EMDB" id="EMD-18534"/>
<dbReference type="EMDB" id="EMD-18875"/>
<dbReference type="EMDB" id="EMD-18950"/>
<dbReference type="EMDB" id="EMD-19004"/>
<dbReference type="EMDB" id="EMD-19054"/>
<dbReference type="EMDB" id="EMD-19055"/>
<dbReference type="EMDB" id="EMD-19058"/>
<dbReference type="EMDB" id="EMD-19059"/>
<dbReference type="EMDB" id="EMD-19426"/>
<dbReference type="EMDB" id="EMD-19427"/>
<dbReference type="EMDB" id="EMD-19428"/>
<dbReference type="EMDB" id="EMD-19429"/>
<dbReference type="EMDB" id="EMD-21856"/>
<dbReference type="EMDB" id="EMD-21857"/>
<dbReference type="EMDB" id="EMD-21858"/>
<dbReference type="EMDB" id="EMD-22669"/>
<dbReference type="EMDB" id="EMD-22670"/>
<dbReference type="EMDB" id="EMD-22671"/>
<dbReference type="EMDB" id="EMD-22672"/>
<dbReference type="EMDB" id="EMD-22673"/>
<dbReference type="EMDB" id="EMD-22674"/>
<dbReference type="EMDB" id="EMD-23528"/>
<dbReference type="EMDB" id="EMD-24120"/>
<dbReference type="EMDB" id="EMD-24132"/>
<dbReference type="EMDB" id="EMD-24133"/>
<dbReference type="EMDB" id="EMD-24134"/>
<dbReference type="EMDB" id="EMD-24135"/>
<dbReference type="EMDB" id="EMD-24136"/>
<dbReference type="EMDB" id="EMD-24803"/>
<dbReference type="EMDB" id="EMD-25407"/>
<dbReference type="EMDB" id="EMD-25409"/>
<dbReference type="EMDB" id="EMD-25411"/>
<dbReference type="EMDB" id="EMD-25418"/>
<dbReference type="EMDB" id="EMD-25420"/>
<dbReference type="EMDB" id="EMD-25421"/>
<dbReference type="EMDB" id="EMD-26486"/>
<dbReference type="EMDB" id="EMD-28165"/>
<dbReference type="EMDB" id="EMD-28197"/>
<dbReference type="EMDB" id="EMD-28254"/>
<dbReference type="EMDB" id="EMD-29214"/>
<dbReference type="EMDB" id="EMD-29449"/>
<dbReference type="EMDB" id="EMD-29620"/>
<dbReference type="EMDB" id="EMD-29621"/>
<dbReference type="EMDB" id="EMD-29624"/>
<dbReference type="EMDB" id="EMD-29627"/>
<dbReference type="EMDB" id="EMD-29628"/>
<dbReference type="EMDB" id="EMD-29631"/>
<dbReference type="EMDB" id="EMD-29634"/>
<dbReference type="EMDB" id="EMD-29786"/>
<dbReference type="EMDB" id="EMD-29787"/>
<dbReference type="EMDB" id="EMD-29788"/>
<dbReference type="EMDB" id="EMD-29819"/>
<dbReference type="EMDB" id="EMD-29820"/>
<dbReference type="EMDB" id="EMD-29821"/>
<dbReference type="EMDB" id="EMD-29822"/>
<dbReference type="EMDB" id="EMD-30598"/>
<dbReference type="EMDB" id="EMD-33660"/>
<dbReference type="EMDB" id="EMD-33661"/>
<dbReference type="EMDB" id="EMD-33662"/>
<dbReference type="EMDB" id="EMD-33663"/>
<dbReference type="EMDB" id="EMD-33664"/>
<dbReference type="EMDB" id="EMD-33665"/>
<dbReference type="EMDB" id="EMD-3489"/>
<dbReference type="EMDB" id="EMD-3490"/>
<dbReference type="EMDB" id="EMD-3492"/>
<dbReference type="EMDB" id="EMD-3493"/>
<dbReference type="EMDB" id="EMD-35001"/>
<dbReference type="EMDB" id="EMD-35020"/>
<dbReference type="EMDB" id="EMD-35022"/>
<dbReference type="EMDB" id="EMD-3508"/>
<dbReference type="EMDB" id="EMD-35411"/>
<dbReference type="EMDB" id="EMD-35412"/>
<dbReference type="EMDB" id="EMD-3713"/>
<dbReference type="EMDB" id="EMD-3730"/>
<dbReference type="EMDB" id="EMD-3898"/>
<dbReference type="EMDB" id="EMD-3899"/>
<dbReference type="EMDB" id="EMD-3903"/>
<dbReference type="EMDB" id="EMD-39577"/>
<dbReference type="EMDB" id="EMD-39578"/>
<dbReference type="EMDB" id="EMD-39579"/>
<dbReference type="EMDB" id="EMD-39580"/>
<dbReference type="EMDB" id="EMD-39581"/>
<dbReference type="EMDB" id="EMD-4001"/>
<dbReference type="EMDB" id="EMD-40882"/>
<dbReference type="EMDB" id="EMD-4121"/>
<dbReference type="EMDB" id="EMD-4122"/>
<dbReference type="EMDB" id="EMD-4123"/>
<dbReference type="EMDB" id="EMD-4124"/>
<dbReference type="EMDB" id="EMD-4125"/>
<dbReference type="EMDB" id="EMD-4126"/>
<dbReference type="EMDB" id="EMD-42453"/>
<dbReference type="EMDB" id="EMD-42454"/>
<dbReference type="EMDB" id="EMD-42473"/>
<dbReference type="EMDB" id="EMD-42474"/>
<dbReference type="EMDB" id="EMD-42477"/>
<dbReference type="EMDB" id="EMD-42479"/>
<dbReference type="EMDB" id="EMD-42492"/>
<dbReference type="EMDB" id="EMD-42493"/>
<dbReference type="EMDB" id="EMD-42503"/>
<dbReference type="EMDB" id="EMD-4476"/>
<dbReference type="EMDB" id="EMD-4477"/>
<dbReference type="EMDB" id="EMD-4478"/>
<dbReference type="EMDB" id="EMD-48479"/>
<dbReference type="EMDB" id="EMD-48513"/>
<dbReference type="EMDB" id="EMD-50296"/>
<dbReference type="EMDB" id="EMD-51318"/>
<dbReference type="EMDB" id="EMD-51340"/>
<dbReference type="EMDB" id="EMD-7289"/>
<dbReference type="EMDB" id="EMD-7341"/>
<dbReference type="EMDB" id="EMD-8107"/>
<dbReference type="EMDB" id="EMD-8238"/>
<dbReference type="EMDB" id="EMD-8279"/>
<dbReference type="EMDB" id="EMD-8280"/>
<dbReference type="EMDB" id="EMD-8281"/>
<dbReference type="EMDB" id="EMD-8282"/>
<dbReference type="EMDB" id="EMD-8615"/>
<dbReference type="EMDB" id="EMD-8616"/>
<dbReference type="EMDB" id="EMD-8617"/>
<dbReference type="EMDB" id="EMD-8618"/>
<dbReference type="EMDB" id="EMD-8619"/>
<dbReference type="EMDB" id="EMD-8620"/>
<dbReference type="EMDB" id="EMD-8813"/>
<dbReference type="EMDB" id="EMD-8814"/>
<dbReference type="EMDB" id="EMD-8815"/>
<dbReference type="EMDB" id="EMD-8828"/>
<dbReference type="SMR" id="P0A7M9"/>
<dbReference type="BioGRID" id="4261184">
    <property type="interactions" value="53"/>
</dbReference>
<dbReference type="BioGRID" id="852722">
    <property type="interactions" value="9"/>
</dbReference>
<dbReference type="ComplexPortal" id="CPX-3807">
    <property type="entry name" value="50S large ribosomal subunit"/>
</dbReference>
<dbReference type="FunCoup" id="P0A7M9">
    <property type="interactions" value="600"/>
</dbReference>
<dbReference type="IntAct" id="P0A7M9">
    <property type="interactions" value="25"/>
</dbReference>
<dbReference type="STRING" id="511145.b3936"/>
<dbReference type="iPTMnet" id="P0A7M9"/>
<dbReference type="jPOST" id="P0A7M9"/>
<dbReference type="PaxDb" id="511145-b3936"/>
<dbReference type="EnsemblBacteria" id="AAC76918">
    <property type="protein sequence ID" value="AAC76918"/>
    <property type="gene ID" value="b3936"/>
</dbReference>
<dbReference type="GeneID" id="93777962"/>
<dbReference type="GeneID" id="948425"/>
<dbReference type="KEGG" id="ecj:JW3907"/>
<dbReference type="KEGG" id="eco:b3936"/>
<dbReference type="KEGG" id="ecoc:C3026_21270"/>
<dbReference type="PATRIC" id="fig|1411691.4.peg.2769"/>
<dbReference type="EchoBASE" id="EB0882"/>
<dbReference type="eggNOG" id="COG0254">
    <property type="taxonomic scope" value="Bacteria"/>
</dbReference>
<dbReference type="HOGENOM" id="CLU_114306_4_3_6"/>
<dbReference type="InParanoid" id="P0A7M9"/>
<dbReference type="OMA" id="IHVDVWS"/>
<dbReference type="OrthoDB" id="9803251at2"/>
<dbReference type="PhylomeDB" id="P0A7M9"/>
<dbReference type="BioCyc" id="EcoCyc:EG10889-MONOMER"/>
<dbReference type="BioCyc" id="MetaCyc:EG10889-MONOMER"/>
<dbReference type="EvolutionaryTrace" id="P0A7M9"/>
<dbReference type="PRO" id="PR:P0A7M9"/>
<dbReference type="Proteomes" id="UP000000625">
    <property type="component" value="Chromosome"/>
</dbReference>
<dbReference type="GO" id="GO:0005737">
    <property type="term" value="C:cytoplasm"/>
    <property type="evidence" value="ECO:0000314"/>
    <property type="project" value="ComplexPortal"/>
</dbReference>
<dbReference type="GO" id="GO:0005829">
    <property type="term" value="C:cytosol"/>
    <property type="evidence" value="ECO:0000314"/>
    <property type="project" value="EcoCyc"/>
</dbReference>
<dbReference type="GO" id="GO:0022625">
    <property type="term" value="C:cytosolic large ribosomal subunit"/>
    <property type="evidence" value="ECO:0000314"/>
    <property type="project" value="EcoCyc"/>
</dbReference>
<dbReference type="GO" id="GO:0019843">
    <property type="term" value="F:rRNA binding"/>
    <property type="evidence" value="ECO:0007669"/>
    <property type="project" value="UniProtKB-KW"/>
</dbReference>
<dbReference type="GO" id="GO:0003735">
    <property type="term" value="F:structural constituent of ribosome"/>
    <property type="evidence" value="ECO:0007669"/>
    <property type="project" value="InterPro"/>
</dbReference>
<dbReference type="GO" id="GO:0008270">
    <property type="term" value="F:zinc ion binding"/>
    <property type="evidence" value="ECO:0000314"/>
    <property type="project" value="EcoCyc"/>
</dbReference>
<dbReference type="GO" id="GO:0002181">
    <property type="term" value="P:cytoplasmic translation"/>
    <property type="evidence" value="ECO:0000303"/>
    <property type="project" value="ComplexPortal"/>
</dbReference>
<dbReference type="GO" id="GO:1904689">
    <property type="term" value="P:negative regulation of cytoplasmic translational initiation"/>
    <property type="evidence" value="ECO:0000270"/>
    <property type="project" value="EcoCyc"/>
</dbReference>
<dbReference type="GO" id="GO:0006412">
    <property type="term" value="P:translation"/>
    <property type="evidence" value="ECO:0000315"/>
    <property type="project" value="EcoCyc"/>
</dbReference>
<dbReference type="GO" id="GO:0006413">
    <property type="term" value="P:translational initiation"/>
    <property type="evidence" value="ECO:0000315"/>
    <property type="project" value="EcoCyc"/>
</dbReference>
<dbReference type="FunFam" id="4.10.830.30:FF:000001">
    <property type="entry name" value="50S ribosomal protein L31"/>
    <property type="match status" value="1"/>
</dbReference>
<dbReference type="Gene3D" id="4.10.830.30">
    <property type="entry name" value="Ribosomal protein L31"/>
    <property type="match status" value="1"/>
</dbReference>
<dbReference type="HAMAP" id="MF_00501">
    <property type="entry name" value="Ribosomal_bL31_1"/>
    <property type="match status" value="1"/>
</dbReference>
<dbReference type="InterPro" id="IPR034704">
    <property type="entry name" value="Ribosomal_bL28/bL31-like_sf"/>
</dbReference>
<dbReference type="InterPro" id="IPR002150">
    <property type="entry name" value="Ribosomal_bL31"/>
</dbReference>
<dbReference type="InterPro" id="IPR027491">
    <property type="entry name" value="Ribosomal_bL31_A"/>
</dbReference>
<dbReference type="InterPro" id="IPR042105">
    <property type="entry name" value="Ribosomal_bL31_sf"/>
</dbReference>
<dbReference type="NCBIfam" id="TIGR00105">
    <property type="entry name" value="L31"/>
    <property type="match status" value="1"/>
</dbReference>
<dbReference type="NCBIfam" id="NF000612">
    <property type="entry name" value="PRK00019.1"/>
    <property type="match status" value="1"/>
</dbReference>
<dbReference type="NCBIfam" id="NF001809">
    <property type="entry name" value="PRK00528.1"/>
    <property type="match status" value="1"/>
</dbReference>
<dbReference type="PANTHER" id="PTHR33280">
    <property type="entry name" value="50S RIBOSOMAL PROTEIN L31, CHLOROPLASTIC"/>
    <property type="match status" value="1"/>
</dbReference>
<dbReference type="PANTHER" id="PTHR33280:SF6">
    <property type="entry name" value="LARGE RIBOSOMAL SUBUNIT PROTEIN BL31A"/>
    <property type="match status" value="1"/>
</dbReference>
<dbReference type="Pfam" id="PF01197">
    <property type="entry name" value="Ribosomal_L31"/>
    <property type="match status" value="1"/>
</dbReference>
<dbReference type="PRINTS" id="PR01249">
    <property type="entry name" value="RIBOSOMALL31"/>
</dbReference>
<dbReference type="SUPFAM" id="SSF143800">
    <property type="entry name" value="L28p-like"/>
    <property type="match status" value="1"/>
</dbReference>
<dbReference type="PROSITE" id="PS01143">
    <property type="entry name" value="RIBOSOMAL_L31"/>
    <property type="match status" value="1"/>
</dbReference>